<organism>
    <name type="scientific">Photobacterium profundum (strain SS9)</name>
    <dbReference type="NCBI Taxonomy" id="298386"/>
    <lineage>
        <taxon>Bacteria</taxon>
        <taxon>Pseudomonadati</taxon>
        <taxon>Pseudomonadota</taxon>
        <taxon>Gammaproteobacteria</taxon>
        <taxon>Vibrionales</taxon>
        <taxon>Vibrionaceae</taxon>
        <taxon>Photobacterium</taxon>
    </lineage>
</organism>
<gene>
    <name type="primary">alr</name>
    <name type="ordered locus">PBPRA3330</name>
</gene>
<sequence length="359" mass="38758">MKAATAYINTDALTHNIRQLHLQAPNSKLLAVVKANGYGHGLLHVAKSLPDADAFGVARIEEALTLRAGGVVKPILLLEGFYGASDLPVIVTNNIHTVVHSIEQLEALESAELDNQAVVWLKIDTGMHRLGVRPEQLDDVVQRLHACDNVAKPLRYMSHFGCADDLASNVTNQQINTFLSLTEGCRGERSLAASAGILAWPDSQLEWIRPGIIMYGVSPFTEPDRSAEAFNMQPVMTLTSSLIAVRDVKEGEQVGYGGIWTSERDTKVGVIAIGYGDGYPRTAPNGTPVLVNGRIVPMAGRVSMDMLTVDLGPNAQDKVGDEAILWGNGLPAEVVAEHIGTIAYELVTKLTSRVDMTYL</sequence>
<protein>
    <recommendedName>
        <fullName evidence="1">Alanine racemase</fullName>
        <ecNumber evidence="1">5.1.1.1</ecNumber>
    </recommendedName>
</protein>
<accession>Q3V7I5</accession>
<dbReference type="EC" id="5.1.1.1" evidence="1"/>
<dbReference type="EMBL" id="CR378673">
    <property type="protein sequence ID" value="CAG21628.1"/>
    <property type="molecule type" value="Genomic_DNA"/>
</dbReference>
<dbReference type="RefSeq" id="WP_011219876.1">
    <property type="nucleotide sequence ID" value="NC_006370.1"/>
</dbReference>
<dbReference type="SMR" id="Q3V7I5"/>
<dbReference type="STRING" id="298386.PBPRA3330"/>
<dbReference type="KEGG" id="ppr:PBPRA3330"/>
<dbReference type="eggNOG" id="COG0787">
    <property type="taxonomic scope" value="Bacteria"/>
</dbReference>
<dbReference type="HOGENOM" id="CLU_028393_1_0_6"/>
<dbReference type="UniPathway" id="UPA00042">
    <property type="reaction ID" value="UER00497"/>
</dbReference>
<dbReference type="Proteomes" id="UP000000593">
    <property type="component" value="Chromosome 1"/>
</dbReference>
<dbReference type="GO" id="GO:0005829">
    <property type="term" value="C:cytosol"/>
    <property type="evidence" value="ECO:0007669"/>
    <property type="project" value="TreeGrafter"/>
</dbReference>
<dbReference type="GO" id="GO:0008784">
    <property type="term" value="F:alanine racemase activity"/>
    <property type="evidence" value="ECO:0007669"/>
    <property type="project" value="UniProtKB-UniRule"/>
</dbReference>
<dbReference type="GO" id="GO:0030170">
    <property type="term" value="F:pyridoxal phosphate binding"/>
    <property type="evidence" value="ECO:0007669"/>
    <property type="project" value="UniProtKB-UniRule"/>
</dbReference>
<dbReference type="GO" id="GO:0030632">
    <property type="term" value="P:D-alanine biosynthetic process"/>
    <property type="evidence" value="ECO:0007669"/>
    <property type="project" value="UniProtKB-UniRule"/>
</dbReference>
<dbReference type="CDD" id="cd06827">
    <property type="entry name" value="PLPDE_III_AR_proteobact"/>
    <property type="match status" value="1"/>
</dbReference>
<dbReference type="FunFam" id="2.40.37.10:FF:000002">
    <property type="entry name" value="Alanine racemase"/>
    <property type="match status" value="1"/>
</dbReference>
<dbReference type="FunFam" id="3.20.20.10:FF:000002">
    <property type="entry name" value="Alanine racemase"/>
    <property type="match status" value="1"/>
</dbReference>
<dbReference type="Gene3D" id="3.20.20.10">
    <property type="entry name" value="Alanine racemase"/>
    <property type="match status" value="1"/>
</dbReference>
<dbReference type="Gene3D" id="2.40.37.10">
    <property type="entry name" value="Lyase, Ornithine Decarboxylase, Chain A, domain 1"/>
    <property type="match status" value="1"/>
</dbReference>
<dbReference type="HAMAP" id="MF_01201">
    <property type="entry name" value="Ala_racemase"/>
    <property type="match status" value="1"/>
</dbReference>
<dbReference type="InterPro" id="IPR000821">
    <property type="entry name" value="Ala_racemase"/>
</dbReference>
<dbReference type="InterPro" id="IPR009006">
    <property type="entry name" value="Ala_racemase/Decarboxylase_C"/>
</dbReference>
<dbReference type="InterPro" id="IPR011079">
    <property type="entry name" value="Ala_racemase_C"/>
</dbReference>
<dbReference type="InterPro" id="IPR001608">
    <property type="entry name" value="Ala_racemase_N"/>
</dbReference>
<dbReference type="InterPro" id="IPR020622">
    <property type="entry name" value="Ala_racemase_pyridoxalP-BS"/>
</dbReference>
<dbReference type="InterPro" id="IPR029066">
    <property type="entry name" value="PLP-binding_barrel"/>
</dbReference>
<dbReference type="NCBIfam" id="TIGR00492">
    <property type="entry name" value="alr"/>
    <property type="match status" value="1"/>
</dbReference>
<dbReference type="PANTHER" id="PTHR30511">
    <property type="entry name" value="ALANINE RACEMASE"/>
    <property type="match status" value="1"/>
</dbReference>
<dbReference type="PANTHER" id="PTHR30511:SF4">
    <property type="entry name" value="ALANINE RACEMASE, BIOSYNTHETIC"/>
    <property type="match status" value="1"/>
</dbReference>
<dbReference type="Pfam" id="PF00842">
    <property type="entry name" value="Ala_racemase_C"/>
    <property type="match status" value="1"/>
</dbReference>
<dbReference type="Pfam" id="PF01168">
    <property type="entry name" value="Ala_racemase_N"/>
    <property type="match status" value="1"/>
</dbReference>
<dbReference type="PRINTS" id="PR00992">
    <property type="entry name" value="ALARACEMASE"/>
</dbReference>
<dbReference type="SMART" id="SM01005">
    <property type="entry name" value="Ala_racemase_C"/>
    <property type="match status" value="1"/>
</dbReference>
<dbReference type="SUPFAM" id="SSF50621">
    <property type="entry name" value="Alanine racemase C-terminal domain-like"/>
    <property type="match status" value="1"/>
</dbReference>
<dbReference type="SUPFAM" id="SSF51419">
    <property type="entry name" value="PLP-binding barrel"/>
    <property type="match status" value="1"/>
</dbReference>
<dbReference type="PROSITE" id="PS00395">
    <property type="entry name" value="ALANINE_RACEMASE"/>
    <property type="match status" value="1"/>
</dbReference>
<name>ALR_PHOPR</name>
<keyword id="KW-0413">Isomerase</keyword>
<keyword id="KW-0663">Pyridoxal phosphate</keyword>
<keyword id="KW-1185">Reference proteome</keyword>
<reference key="1">
    <citation type="journal article" date="2005" name="Science">
        <title>Life at depth: Photobacterium profundum genome sequence and expression analysis.</title>
        <authorList>
            <person name="Vezzi A."/>
            <person name="Campanaro S."/>
            <person name="D'Angelo M."/>
            <person name="Simonato F."/>
            <person name="Vitulo N."/>
            <person name="Lauro F.M."/>
            <person name="Cestaro A."/>
            <person name="Malacrida G."/>
            <person name="Simionati B."/>
            <person name="Cannata N."/>
            <person name="Romualdi C."/>
            <person name="Bartlett D.H."/>
            <person name="Valle G."/>
        </authorList>
    </citation>
    <scope>NUCLEOTIDE SEQUENCE [LARGE SCALE GENOMIC DNA]</scope>
    <source>
        <strain>ATCC BAA-1253 / SS9</strain>
    </source>
</reference>
<proteinExistence type="inferred from homology"/>
<comment type="function">
    <text evidence="1">Catalyzes the interconversion of L-alanine and D-alanine. May also act on other amino acids.</text>
</comment>
<comment type="catalytic activity">
    <reaction evidence="1">
        <text>L-alanine = D-alanine</text>
        <dbReference type="Rhea" id="RHEA:20249"/>
        <dbReference type="ChEBI" id="CHEBI:57416"/>
        <dbReference type="ChEBI" id="CHEBI:57972"/>
        <dbReference type="EC" id="5.1.1.1"/>
    </reaction>
</comment>
<comment type="cofactor">
    <cofactor evidence="1">
        <name>pyridoxal 5'-phosphate</name>
        <dbReference type="ChEBI" id="CHEBI:597326"/>
    </cofactor>
</comment>
<comment type="pathway">
    <text evidence="1">Amino-acid biosynthesis; D-alanine biosynthesis; D-alanine from L-alanine: step 1/1.</text>
</comment>
<comment type="similarity">
    <text evidence="1">Belongs to the alanine racemase family.</text>
</comment>
<feature type="chain" id="PRO_1000066022" description="Alanine racemase">
    <location>
        <begin position="1"/>
        <end position="359"/>
    </location>
</feature>
<feature type="active site" description="Proton acceptor; specific for D-alanine" evidence="1">
    <location>
        <position position="34"/>
    </location>
</feature>
<feature type="active site" description="Proton acceptor; specific for L-alanine" evidence="1">
    <location>
        <position position="256"/>
    </location>
</feature>
<feature type="binding site" evidence="1">
    <location>
        <position position="129"/>
    </location>
    <ligand>
        <name>substrate</name>
    </ligand>
</feature>
<feature type="binding site" evidence="1">
    <location>
        <position position="304"/>
    </location>
    <ligand>
        <name>substrate</name>
    </ligand>
</feature>
<feature type="modified residue" description="N6-(pyridoxal phosphate)lysine" evidence="1">
    <location>
        <position position="34"/>
    </location>
</feature>
<evidence type="ECO:0000255" key="1">
    <source>
        <dbReference type="HAMAP-Rule" id="MF_01201"/>
    </source>
</evidence>